<organism>
    <name type="scientific">Mus musculus</name>
    <name type="common">Mouse</name>
    <dbReference type="NCBI Taxonomy" id="10090"/>
    <lineage>
        <taxon>Eukaryota</taxon>
        <taxon>Metazoa</taxon>
        <taxon>Chordata</taxon>
        <taxon>Craniata</taxon>
        <taxon>Vertebrata</taxon>
        <taxon>Euteleostomi</taxon>
        <taxon>Mammalia</taxon>
        <taxon>Eutheria</taxon>
        <taxon>Euarchontoglires</taxon>
        <taxon>Glires</taxon>
        <taxon>Rodentia</taxon>
        <taxon>Myomorpha</taxon>
        <taxon>Muroidea</taxon>
        <taxon>Muridae</taxon>
        <taxon>Murinae</taxon>
        <taxon>Mus</taxon>
        <taxon>Mus</taxon>
    </lineage>
</organism>
<feature type="chain" id="PRO_0000204216" description="Regulator of G-protein signaling 13">
    <location>
        <begin position="1"/>
        <end position="158"/>
    </location>
</feature>
<feature type="domain" description="RGS" evidence="1">
    <location>
        <begin position="34"/>
        <end position="150"/>
    </location>
</feature>
<proteinExistence type="evidence at protein level"/>
<keyword id="KW-1185">Reference proteome</keyword>
<keyword id="KW-0734">Signal transduction inhibitor</keyword>
<evidence type="ECO:0000255" key="1">
    <source>
        <dbReference type="PROSITE-ProRule" id="PRU00171"/>
    </source>
</evidence>
<sequence>MSRHICWICKLCRDESKRLPSNLTLDEVLKWAQSLESLMATKYGPIVYTAYLKLEHSDENIKFWMACETYKKIASRRGRISRAKKLYNIYIQPQSPREINIDSTTREAIIKSIREPTQTCFEEAQKIVYMHMEMDSYPRFLKSEMYQQLLKTVQSQSS</sequence>
<protein>
    <recommendedName>
        <fullName>Regulator of G-protein signaling 13</fullName>
        <shortName>RGS13</shortName>
    </recommendedName>
</protein>
<reference key="1">
    <citation type="journal article" date="2002" name="J. Immunol.">
        <title>RGS13 regulates germinal center B lymphocytes responsiveness to CXC chemokine ligand (CXCL)12 and CXCL13.</title>
        <authorList>
            <person name="Shi G.X."/>
            <person name="Harrison K."/>
            <person name="Wilson G.L."/>
            <person name="Moratz C."/>
            <person name="Kehrl J.H."/>
        </authorList>
    </citation>
    <scope>NUCLEOTIDE SEQUENCE [MRNA]</scope>
    <source>
        <strain>C57BL/6J</strain>
    </source>
</reference>
<reference key="2">
    <citation type="journal article" date="2005" name="Science">
        <title>The transcriptional landscape of the mammalian genome.</title>
        <authorList>
            <person name="Carninci P."/>
            <person name="Kasukawa T."/>
            <person name="Katayama S."/>
            <person name="Gough J."/>
            <person name="Frith M.C."/>
            <person name="Maeda N."/>
            <person name="Oyama R."/>
            <person name="Ravasi T."/>
            <person name="Lenhard B."/>
            <person name="Wells C."/>
            <person name="Kodzius R."/>
            <person name="Shimokawa K."/>
            <person name="Bajic V.B."/>
            <person name="Brenner S.E."/>
            <person name="Batalov S."/>
            <person name="Forrest A.R."/>
            <person name="Zavolan M."/>
            <person name="Davis M.J."/>
            <person name="Wilming L.G."/>
            <person name="Aidinis V."/>
            <person name="Allen J.E."/>
            <person name="Ambesi-Impiombato A."/>
            <person name="Apweiler R."/>
            <person name="Aturaliya R.N."/>
            <person name="Bailey T.L."/>
            <person name="Bansal M."/>
            <person name="Baxter L."/>
            <person name="Beisel K.W."/>
            <person name="Bersano T."/>
            <person name="Bono H."/>
            <person name="Chalk A.M."/>
            <person name="Chiu K.P."/>
            <person name="Choudhary V."/>
            <person name="Christoffels A."/>
            <person name="Clutterbuck D.R."/>
            <person name="Crowe M.L."/>
            <person name="Dalla E."/>
            <person name="Dalrymple B.P."/>
            <person name="de Bono B."/>
            <person name="Della Gatta G."/>
            <person name="di Bernardo D."/>
            <person name="Down T."/>
            <person name="Engstrom P."/>
            <person name="Fagiolini M."/>
            <person name="Faulkner G."/>
            <person name="Fletcher C.F."/>
            <person name="Fukushima T."/>
            <person name="Furuno M."/>
            <person name="Futaki S."/>
            <person name="Gariboldi M."/>
            <person name="Georgii-Hemming P."/>
            <person name="Gingeras T.R."/>
            <person name="Gojobori T."/>
            <person name="Green R.E."/>
            <person name="Gustincich S."/>
            <person name="Harbers M."/>
            <person name="Hayashi Y."/>
            <person name="Hensch T.K."/>
            <person name="Hirokawa N."/>
            <person name="Hill D."/>
            <person name="Huminiecki L."/>
            <person name="Iacono M."/>
            <person name="Ikeo K."/>
            <person name="Iwama A."/>
            <person name="Ishikawa T."/>
            <person name="Jakt M."/>
            <person name="Kanapin A."/>
            <person name="Katoh M."/>
            <person name="Kawasawa Y."/>
            <person name="Kelso J."/>
            <person name="Kitamura H."/>
            <person name="Kitano H."/>
            <person name="Kollias G."/>
            <person name="Krishnan S.P."/>
            <person name="Kruger A."/>
            <person name="Kummerfeld S.K."/>
            <person name="Kurochkin I.V."/>
            <person name="Lareau L.F."/>
            <person name="Lazarevic D."/>
            <person name="Lipovich L."/>
            <person name="Liu J."/>
            <person name="Liuni S."/>
            <person name="McWilliam S."/>
            <person name="Madan Babu M."/>
            <person name="Madera M."/>
            <person name="Marchionni L."/>
            <person name="Matsuda H."/>
            <person name="Matsuzawa S."/>
            <person name="Miki H."/>
            <person name="Mignone F."/>
            <person name="Miyake S."/>
            <person name="Morris K."/>
            <person name="Mottagui-Tabar S."/>
            <person name="Mulder N."/>
            <person name="Nakano N."/>
            <person name="Nakauchi H."/>
            <person name="Ng P."/>
            <person name="Nilsson R."/>
            <person name="Nishiguchi S."/>
            <person name="Nishikawa S."/>
            <person name="Nori F."/>
            <person name="Ohara O."/>
            <person name="Okazaki Y."/>
            <person name="Orlando V."/>
            <person name="Pang K.C."/>
            <person name="Pavan W.J."/>
            <person name="Pavesi G."/>
            <person name="Pesole G."/>
            <person name="Petrovsky N."/>
            <person name="Piazza S."/>
            <person name="Reed J."/>
            <person name="Reid J.F."/>
            <person name="Ring B.Z."/>
            <person name="Ringwald M."/>
            <person name="Rost B."/>
            <person name="Ruan Y."/>
            <person name="Salzberg S.L."/>
            <person name="Sandelin A."/>
            <person name="Schneider C."/>
            <person name="Schoenbach C."/>
            <person name="Sekiguchi K."/>
            <person name="Semple C.A."/>
            <person name="Seno S."/>
            <person name="Sessa L."/>
            <person name="Sheng Y."/>
            <person name="Shibata Y."/>
            <person name="Shimada H."/>
            <person name="Shimada K."/>
            <person name="Silva D."/>
            <person name="Sinclair B."/>
            <person name="Sperling S."/>
            <person name="Stupka E."/>
            <person name="Sugiura K."/>
            <person name="Sultana R."/>
            <person name="Takenaka Y."/>
            <person name="Taki K."/>
            <person name="Tammoja K."/>
            <person name="Tan S.L."/>
            <person name="Tang S."/>
            <person name="Taylor M.S."/>
            <person name="Tegner J."/>
            <person name="Teichmann S.A."/>
            <person name="Ueda H.R."/>
            <person name="van Nimwegen E."/>
            <person name="Verardo R."/>
            <person name="Wei C.L."/>
            <person name="Yagi K."/>
            <person name="Yamanishi H."/>
            <person name="Zabarovsky E."/>
            <person name="Zhu S."/>
            <person name="Zimmer A."/>
            <person name="Hide W."/>
            <person name="Bult C."/>
            <person name="Grimmond S.M."/>
            <person name="Teasdale R.D."/>
            <person name="Liu E.T."/>
            <person name="Brusic V."/>
            <person name="Quackenbush J."/>
            <person name="Wahlestedt C."/>
            <person name="Mattick J.S."/>
            <person name="Hume D.A."/>
            <person name="Kai C."/>
            <person name="Sasaki D."/>
            <person name="Tomaru Y."/>
            <person name="Fukuda S."/>
            <person name="Kanamori-Katayama M."/>
            <person name="Suzuki M."/>
            <person name="Aoki J."/>
            <person name="Arakawa T."/>
            <person name="Iida J."/>
            <person name="Imamura K."/>
            <person name="Itoh M."/>
            <person name="Kato T."/>
            <person name="Kawaji H."/>
            <person name="Kawagashira N."/>
            <person name="Kawashima T."/>
            <person name="Kojima M."/>
            <person name="Kondo S."/>
            <person name="Konno H."/>
            <person name="Nakano K."/>
            <person name="Ninomiya N."/>
            <person name="Nishio T."/>
            <person name="Okada M."/>
            <person name="Plessy C."/>
            <person name="Shibata K."/>
            <person name="Shiraki T."/>
            <person name="Suzuki S."/>
            <person name="Tagami M."/>
            <person name="Waki K."/>
            <person name="Watahiki A."/>
            <person name="Okamura-Oho Y."/>
            <person name="Suzuki H."/>
            <person name="Kawai J."/>
            <person name="Hayashizaki Y."/>
        </authorList>
    </citation>
    <scope>NUCLEOTIDE SEQUENCE [LARGE SCALE MRNA]</scope>
    <source>
        <strain>C57BL/6J</strain>
        <tissue>Cerebellum</tissue>
    </source>
</reference>
<reference key="3">
    <citation type="journal article" date="2004" name="Genome Res.">
        <title>The status, quality, and expansion of the NIH full-length cDNA project: the Mammalian Gene Collection (MGC).</title>
        <authorList>
            <consortium name="The MGC Project Team"/>
        </authorList>
    </citation>
    <scope>NUCLEOTIDE SEQUENCE [LARGE SCALE MRNA]</scope>
    <source>
        <tissue>Brain</tissue>
    </source>
</reference>
<name>RGS13_MOUSE</name>
<dbReference type="EMBL" id="AF498319">
    <property type="protein sequence ID" value="AAM74139.1"/>
    <property type="molecule type" value="mRNA"/>
</dbReference>
<dbReference type="EMBL" id="AK043268">
    <property type="protein sequence ID" value="BAC31511.1"/>
    <property type="molecule type" value="mRNA"/>
</dbReference>
<dbReference type="EMBL" id="BC049624">
    <property type="protein sequence ID" value="AAH49624.1"/>
    <property type="molecule type" value="mRNA"/>
</dbReference>
<dbReference type="CCDS" id="CCDS15348.1"/>
<dbReference type="RefSeq" id="NP_694811.1">
    <property type="nucleotide sequence ID" value="NM_153171.5"/>
</dbReference>
<dbReference type="RefSeq" id="XP_006529676.1">
    <property type="nucleotide sequence ID" value="XM_006529613.3"/>
</dbReference>
<dbReference type="SMR" id="Q8K443"/>
<dbReference type="BioGRID" id="232932">
    <property type="interactions" value="2"/>
</dbReference>
<dbReference type="FunCoup" id="Q8K443">
    <property type="interactions" value="430"/>
</dbReference>
<dbReference type="IntAct" id="Q8K443">
    <property type="interactions" value="1"/>
</dbReference>
<dbReference type="STRING" id="10090.ENSMUSP00000107572"/>
<dbReference type="iPTMnet" id="Q8K443"/>
<dbReference type="PhosphoSitePlus" id="Q8K443"/>
<dbReference type="jPOST" id="Q8K443"/>
<dbReference type="PaxDb" id="10090-ENSMUSP00000058813"/>
<dbReference type="ProteomicsDB" id="255015"/>
<dbReference type="Antibodypedia" id="20618">
    <property type="antibodies" value="241 antibodies from 31 providers"/>
</dbReference>
<dbReference type="DNASU" id="246709"/>
<dbReference type="Ensembl" id="ENSMUST00000052375.8">
    <property type="protein sequence ID" value="ENSMUSP00000058813.2"/>
    <property type="gene ID" value="ENSMUSG00000051079.9"/>
</dbReference>
<dbReference type="Ensembl" id="ENSMUST00000111941.2">
    <property type="protein sequence ID" value="ENSMUSP00000107572.2"/>
    <property type="gene ID" value="ENSMUSG00000051079.9"/>
</dbReference>
<dbReference type="GeneID" id="246709"/>
<dbReference type="KEGG" id="mmu:246709"/>
<dbReference type="UCSC" id="uc007cxh.1">
    <property type="organism name" value="mouse"/>
</dbReference>
<dbReference type="AGR" id="MGI:2180585"/>
<dbReference type="CTD" id="6003"/>
<dbReference type="MGI" id="MGI:2180585">
    <property type="gene designation" value="Rgs13"/>
</dbReference>
<dbReference type="VEuPathDB" id="HostDB:ENSMUSG00000051079"/>
<dbReference type="eggNOG" id="KOG3589">
    <property type="taxonomic scope" value="Eukaryota"/>
</dbReference>
<dbReference type="GeneTree" id="ENSGT00940000158520"/>
<dbReference type="HOGENOM" id="CLU_059863_1_5_1"/>
<dbReference type="InParanoid" id="Q8K443"/>
<dbReference type="OMA" id="EYIQPQA"/>
<dbReference type="OrthoDB" id="196547at2759"/>
<dbReference type="PhylomeDB" id="Q8K443"/>
<dbReference type="TreeFam" id="TF315837"/>
<dbReference type="Reactome" id="R-MMU-416476">
    <property type="pathway name" value="G alpha (q) signalling events"/>
</dbReference>
<dbReference type="Reactome" id="R-MMU-418594">
    <property type="pathway name" value="G alpha (i) signalling events"/>
</dbReference>
<dbReference type="BioGRID-ORCS" id="246709">
    <property type="hits" value="2 hits in 76 CRISPR screens"/>
</dbReference>
<dbReference type="ChiTaRS" id="Rgs13">
    <property type="organism name" value="mouse"/>
</dbReference>
<dbReference type="PRO" id="PR:Q8K443"/>
<dbReference type="Proteomes" id="UP000000589">
    <property type="component" value="Chromosome 1"/>
</dbReference>
<dbReference type="RNAct" id="Q8K443">
    <property type="molecule type" value="protein"/>
</dbReference>
<dbReference type="Bgee" id="ENSMUSG00000051079">
    <property type="expression patterns" value="Expressed in cumulus cell and 40 other cell types or tissues"/>
</dbReference>
<dbReference type="GO" id="GO:0005829">
    <property type="term" value="C:cytosol"/>
    <property type="evidence" value="ECO:0000314"/>
    <property type="project" value="MGI"/>
</dbReference>
<dbReference type="GO" id="GO:0005634">
    <property type="term" value="C:nucleus"/>
    <property type="evidence" value="ECO:0000314"/>
    <property type="project" value="MGI"/>
</dbReference>
<dbReference type="GO" id="GO:0005886">
    <property type="term" value="C:plasma membrane"/>
    <property type="evidence" value="ECO:0000314"/>
    <property type="project" value="MGI"/>
</dbReference>
<dbReference type="GO" id="GO:0007186">
    <property type="term" value="P:G protein-coupled receptor signaling pathway"/>
    <property type="evidence" value="ECO:0000353"/>
    <property type="project" value="MGI"/>
</dbReference>
<dbReference type="GO" id="GO:0045744">
    <property type="term" value="P:negative regulation of G protein-coupled receptor signaling pathway"/>
    <property type="evidence" value="ECO:0000314"/>
    <property type="project" value="MGI"/>
</dbReference>
<dbReference type="FunFam" id="1.10.167.10:FF:000001">
    <property type="entry name" value="Putative regulator of g-protein signaling 12"/>
    <property type="match status" value="1"/>
</dbReference>
<dbReference type="Gene3D" id="1.10.196.10">
    <property type="match status" value="2"/>
</dbReference>
<dbReference type="Gene3D" id="1.10.167.10">
    <property type="entry name" value="Regulator of G-protein Signalling 4, domain 2"/>
    <property type="match status" value="1"/>
</dbReference>
<dbReference type="InterPro" id="IPR016137">
    <property type="entry name" value="RGS"/>
</dbReference>
<dbReference type="InterPro" id="IPR036305">
    <property type="entry name" value="RGS_sf"/>
</dbReference>
<dbReference type="InterPro" id="IPR024066">
    <property type="entry name" value="RGS_subdom1/3"/>
</dbReference>
<dbReference type="InterPro" id="IPR044926">
    <property type="entry name" value="RGS_subdomain_2"/>
</dbReference>
<dbReference type="PANTHER" id="PTHR10845">
    <property type="entry name" value="REGULATOR OF G PROTEIN SIGNALING"/>
    <property type="match status" value="1"/>
</dbReference>
<dbReference type="PANTHER" id="PTHR10845:SF32">
    <property type="entry name" value="REGULATOR OF G-PROTEIN SIGNALING 13"/>
    <property type="match status" value="1"/>
</dbReference>
<dbReference type="Pfam" id="PF00615">
    <property type="entry name" value="RGS"/>
    <property type="match status" value="1"/>
</dbReference>
<dbReference type="PRINTS" id="PR01301">
    <property type="entry name" value="RGSPROTEIN"/>
</dbReference>
<dbReference type="SMART" id="SM00315">
    <property type="entry name" value="RGS"/>
    <property type="match status" value="1"/>
</dbReference>
<dbReference type="SUPFAM" id="SSF48097">
    <property type="entry name" value="Regulator of G-protein signaling, RGS"/>
    <property type="match status" value="1"/>
</dbReference>
<dbReference type="PROSITE" id="PS50132">
    <property type="entry name" value="RGS"/>
    <property type="match status" value="1"/>
</dbReference>
<gene>
    <name type="primary">Rgs13</name>
</gene>
<comment type="function">
    <text>Inhibits signal transduction by increasing the GTPase activity of G protein alpha subunits thereby driving them into their inactive GDP-bound form. Binds to both G(i)-alpha and G(q)-alpha.</text>
</comment>
<comment type="interaction">
    <interactant intactId="EBI-645999">
        <id>Q8K443</id>
    </interactant>
    <interactant intactId="EBI-642469">
        <id>Q9CZW5</id>
        <label>Tomm70</label>
    </interactant>
    <organismsDiffer>false</organismsDiffer>
    <experiments>12</experiments>
</comment>
<accession>Q8K443</accession>